<comment type="function">
    <text evidence="1">Catalyzes the ATP-dependent transfer of a sulfur to tRNA to produce 4-thiouridine in position 8 of tRNAs, which functions as a near-UV photosensor. Also catalyzes the transfer of sulfur to the sulfur carrier protein ThiS, forming ThiS-thiocarboxylate. This is a step in the synthesis of thiazole, in the thiamine biosynthesis pathway. The sulfur is donated as persulfide by IscS.</text>
</comment>
<comment type="catalytic activity">
    <reaction evidence="1">
        <text>[ThiI sulfur-carrier protein]-S-sulfanyl-L-cysteine + a uridine in tRNA + 2 reduced [2Fe-2S]-[ferredoxin] + ATP + H(+) = [ThiI sulfur-carrier protein]-L-cysteine + a 4-thiouridine in tRNA + 2 oxidized [2Fe-2S]-[ferredoxin] + AMP + diphosphate</text>
        <dbReference type="Rhea" id="RHEA:24176"/>
        <dbReference type="Rhea" id="RHEA-COMP:10000"/>
        <dbReference type="Rhea" id="RHEA-COMP:10001"/>
        <dbReference type="Rhea" id="RHEA-COMP:13337"/>
        <dbReference type="Rhea" id="RHEA-COMP:13338"/>
        <dbReference type="Rhea" id="RHEA-COMP:13339"/>
        <dbReference type="Rhea" id="RHEA-COMP:13340"/>
        <dbReference type="ChEBI" id="CHEBI:15378"/>
        <dbReference type="ChEBI" id="CHEBI:29950"/>
        <dbReference type="ChEBI" id="CHEBI:30616"/>
        <dbReference type="ChEBI" id="CHEBI:33019"/>
        <dbReference type="ChEBI" id="CHEBI:33737"/>
        <dbReference type="ChEBI" id="CHEBI:33738"/>
        <dbReference type="ChEBI" id="CHEBI:61963"/>
        <dbReference type="ChEBI" id="CHEBI:65315"/>
        <dbReference type="ChEBI" id="CHEBI:136798"/>
        <dbReference type="ChEBI" id="CHEBI:456215"/>
        <dbReference type="EC" id="2.8.1.4"/>
    </reaction>
</comment>
<comment type="catalytic activity">
    <reaction evidence="1">
        <text>[ThiS sulfur-carrier protein]-C-terminal Gly-Gly-AMP + S-sulfanyl-L-cysteinyl-[cysteine desulfurase] + AH2 = [ThiS sulfur-carrier protein]-C-terminal-Gly-aminoethanethioate + L-cysteinyl-[cysteine desulfurase] + A + AMP + 2 H(+)</text>
        <dbReference type="Rhea" id="RHEA:43340"/>
        <dbReference type="Rhea" id="RHEA-COMP:12157"/>
        <dbReference type="Rhea" id="RHEA-COMP:12158"/>
        <dbReference type="Rhea" id="RHEA-COMP:12910"/>
        <dbReference type="Rhea" id="RHEA-COMP:19908"/>
        <dbReference type="ChEBI" id="CHEBI:13193"/>
        <dbReference type="ChEBI" id="CHEBI:15378"/>
        <dbReference type="ChEBI" id="CHEBI:17499"/>
        <dbReference type="ChEBI" id="CHEBI:29950"/>
        <dbReference type="ChEBI" id="CHEBI:61963"/>
        <dbReference type="ChEBI" id="CHEBI:90618"/>
        <dbReference type="ChEBI" id="CHEBI:232372"/>
        <dbReference type="ChEBI" id="CHEBI:456215"/>
    </reaction>
</comment>
<comment type="pathway">
    <text evidence="1">Cofactor biosynthesis; thiamine diphosphate biosynthesis.</text>
</comment>
<comment type="subcellular location">
    <subcellularLocation>
        <location evidence="1">Cytoplasm</location>
    </subcellularLocation>
</comment>
<comment type="similarity">
    <text evidence="1">Belongs to the ThiI family.</text>
</comment>
<accession>C3MR91</accession>
<keyword id="KW-0067">ATP-binding</keyword>
<keyword id="KW-0963">Cytoplasm</keyword>
<keyword id="KW-0547">Nucleotide-binding</keyword>
<keyword id="KW-0694">RNA-binding</keyword>
<keyword id="KW-0784">Thiamine biosynthesis</keyword>
<keyword id="KW-0808">Transferase</keyword>
<keyword id="KW-0820">tRNA-binding</keyword>
<sequence>MLIIIRPSGEIALKSPRSRRNFEHTLANNIRSVIKEGKIWRSQGVLFLEVNDNNKNIEELSKVFGIASFSPVMSIKSYNNNLEDIINKAKEVFAEIVKGKIFSVRAKRIGSHNFTSLDVQRKVGEALYPFSRGVNLENPEVEVFIEIRNDVAYFYYKIIKGPRGLPVGVAGKTVVLFSGGIDSPVATWMMMKRGSIPVILNFNLGGSVHRKFVLEELSVLRKWSGGHKLKLFIVNGTDVLIKLSQIEKRNRVVMLKRVMYKVAERLCDKANAKSITTGESLSQVSSQTMTNLYVTEYGIKYPIFRPLIGFDKEEIVELARKIGTYEYSIKLPEYCAISTKARTSVELNEVLKDEENLNIDYEKVLENSEVIEI</sequence>
<gene>
    <name evidence="1" type="primary">thiI</name>
    <name type="ordered locus">LS215_1909</name>
</gene>
<protein>
    <recommendedName>
        <fullName evidence="1">Probable tRNA sulfurtransferase</fullName>
        <ecNumber evidence="1">2.8.1.4</ecNumber>
    </recommendedName>
    <alternativeName>
        <fullName evidence="1">Sulfur carrier protein ThiS sulfurtransferase</fullName>
    </alternativeName>
    <alternativeName>
        <fullName evidence="1">Thiamine biosynthesis protein ThiI</fullName>
    </alternativeName>
    <alternativeName>
        <fullName evidence="1">tRNA 4-thiouridine synthase</fullName>
    </alternativeName>
</protein>
<name>THII_SACI2</name>
<proteinExistence type="inferred from homology"/>
<evidence type="ECO:0000255" key="1">
    <source>
        <dbReference type="HAMAP-Rule" id="MF_00021"/>
    </source>
</evidence>
<dbReference type="EC" id="2.8.1.4" evidence="1"/>
<dbReference type="EMBL" id="CP001399">
    <property type="protein sequence ID" value="ACP35904.1"/>
    <property type="molecule type" value="Genomic_DNA"/>
</dbReference>
<dbReference type="RefSeq" id="WP_012713975.1">
    <property type="nucleotide sequence ID" value="NC_012589.1"/>
</dbReference>
<dbReference type="SMR" id="C3MR91"/>
<dbReference type="GeneID" id="7799553"/>
<dbReference type="KEGG" id="sis:LS215_1909"/>
<dbReference type="HOGENOM" id="CLU_037952_4_0_2"/>
<dbReference type="OrthoDB" id="372227at2157"/>
<dbReference type="UniPathway" id="UPA00060"/>
<dbReference type="Proteomes" id="UP000001747">
    <property type="component" value="Chromosome"/>
</dbReference>
<dbReference type="GO" id="GO:0005829">
    <property type="term" value="C:cytosol"/>
    <property type="evidence" value="ECO:0007669"/>
    <property type="project" value="TreeGrafter"/>
</dbReference>
<dbReference type="GO" id="GO:0005524">
    <property type="term" value="F:ATP binding"/>
    <property type="evidence" value="ECO:0007669"/>
    <property type="project" value="UniProtKB-UniRule"/>
</dbReference>
<dbReference type="GO" id="GO:0004810">
    <property type="term" value="F:CCA tRNA nucleotidyltransferase activity"/>
    <property type="evidence" value="ECO:0007669"/>
    <property type="project" value="InterPro"/>
</dbReference>
<dbReference type="GO" id="GO:0000049">
    <property type="term" value="F:tRNA binding"/>
    <property type="evidence" value="ECO:0007669"/>
    <property type="project" value="UniProtKB-UniRule"/>
</dbReference>
<dbReference type="GO" id="GO:0140741">
    <property type="term" value="F:tRNA-uracil-4 sulfurtransferase activity"/>
    <property type="evidence" value="ECO:0007669"/>
    <property type="project" value="UniProtKB-EC"/>
</dbReference>
<dbReference type="GO" id="GO:0009228">
    <property type="term" value="P:thiamine biosynthetic process"/>
    <property type="evidence" value="ECO:0007669"/>
    <property type="project" value="UniProtKB-KW"/>
</dbReference>
<dbReference type="GO" id="GO:0009229">
    <property type="term" value="P:thiamine diphosphate biosynthetic process"/>
    <property type="evidence" value="ECO:0007669"/>
    <property type="project" value="UniProtKB-UniRule"/>
</dbReference>
<dbReference type="GO" id="GO:0052837">
    <property type="term" value="P:thiazole biosynthetic process"/>
    <property type="evidence" value="ECO:0007669"/>
    <property type="project" value="TreeGrafter"/>
</dbReference>
<dbReference type="GO" id="GO:0002937">
    <property type="term" value="P:tRNA 4-thiouridine biosynthesis"/>
    <property type="evidence" value="ECO:0007669"/>
    <property type="project" value="TreeGrafter"/>
</dbReference>
<dbReference type="CDD" id="cd01712">
    <property type="entry name" value="PPase_ThiI"/>
    <property type="match status" value="1"/>
</dbReference>
<dbReference type="CDD" id="cd11716">
    <property type="entry name" value="THUMP_ThiI"/>
    <property type="match status" value="1"/>
</dbReference>
<dbReference type="Gene3D" id="3.30.2130.30">
    <property type="match status" value="1"/>
</dbReference>
<dbReference type="Gene3D" id="3.40.50.620">
    <property type="entry name" value="HUPs"/>
    <property type="match status" value="1"/>
</dbReference>
<dbReference type="HAMAP" id="MF_00021">
    <property type="entry name" value="ThiI"/>
    <property type="match status" value="1"/>
</dbReference>
<dbReference type="InterPro" id="IPR014729">
    <property type="entry name" value="Rossmann-like_a/b/a_fold"/>
</dbReference>
<dbReference type="InterPro" id="IPR020536">
    <property type="entry name" value="ThiI_AANH"/>
</dbReference>
<dbReference type="InterPro" id="IPR054173">
    <property type="entry name" value="ThiI_fer"/>
</dbReference>
<dbReference type="InterPro" id="IPR049961">
    <property type="entry name" value="ThiI_N"/>
</dbReference>
<dbReference type="InterPro" id="IPR004114">
    <property type="entry name" value="THUMP_dom"/>
</dbReference>
<dbReference type="InterPro" id="IPR049962">
    <property type="entry name" value="THUMP_ThiI"/>
</dbReference>
<dbReference type="InterPro" id="IPR003720">
    <property type="entry name" value="tRNA_STrfase"/>
</dbReference>
<dbReference type="InterPro" id="IPR050102">
    <property type="entry name" value="tRNA_sulfurtransferase_ThiI"/>
</dbReference>
<dbReference type="NCBIfam" id="TIGR00342">
    <property type="entry name" value="tRNA uracil 4-sulfurtransferase ThiI"/>
    <property type="match status" value="1"/>
</dbReference>
<dbReference type="PANTHER" id="PTHR43209">
    <property type="entry name" value="TRNA SULFURTRANSFERASE"/>
    <property type="match status" value="1"/>
</dbReference>
<dbReference type="PANTHER" id="PTHR43209:SF1">
    <property type="entry name" value="TRNA SULFURTRANSFERASE"/>
    <property type="match status" value="1"/>
</dbReference>
<dbReference type="Pfam" id="PF02568">
    <property type="entry name" value="ThiI"/>
    <property type="match status" value="1"/>
</dbReference>
<dbReference type="Pfam" id="PF22025">
    <property type="entry name" value="ThiI_fer"/>
    <property type="match status" value="1"/>
</dbReference>
<dbReference type="Pfam" id="PF02926">
    <property type="entry name" value="THUMP"/>
    <property type="match status" value="1"/>
</dbReference>
<dbReference type="SMART" id="SM00981">
    <property type="entry name" value="THUMP"/>
    <property type="match status" value="1"/>
</dbReference>
<dbReference type="SUPFAM" id="SSF52402">
    <property type="entry name" value="Adenine nucleotide alpha hydrolases-like"/>
    <property type="match status" value="1"/>
</dbReference>
<dbReference type="SUPFAM" id="SSF143437">
    <property type="entry name" value="THUMP domain-like"/>
    <property type="match status" value="1"/>
</dbReference>
<dbReference type="PROSITE" id="PS51165">
    <property type="entry name" value="THUMP"/>
    <property type="match status" value="1"/>
</dbReference>
<reference key="1">
    <citation type="journal article" date="2009" name="Proc. Natl. Acad. Sci. U.S.A.">
        <title>Biogeography of the Sulfolobus islandicus pan-genome.</title>
        <authorList>
            <person name="Reno M.L."/>
            <person name="Held N.L."/>
            <person name="Fields C.J."/>
            <person name="Burke P.V."/>
            <person name="Whitaker R.J."/>
        </authorList>
    </citation>
    <scope>NUCLEOTIDE SEQUENCE [LARGE SCALE GENOMIC DNA]</scope>
    <source>
        <strain>L.S.2.15 / Lassen #1</strain>
    </source>
</reference>
<organism>
    <name type="scientific">Saccharolobus islandicus (strain L.S.2.15 / Lassen #1)</name>
    <name type="common">Sulfolobus islandicus</name>
    <dbReference type="NCBI Taxonomy" id="429572"/>
    <lineage>
        <taxon>Archaea</taxon>
        <taxon>Thermoproteota</taxon>
        <taxon>Thermoprotei</taxon>
        <taxon>Sulfolobales</taxon>
        <taxon>Sulfolobaceae</taxon>
        <taxon>Saccharolobus</taxon>
    </lineage>
</organism>
<feature type="chain" id="PRO_1000201922" description="Probable tRNA sulfurtransferase">
    <location>
        <begin position="1"/>
        <end position="373"/>
    </location>
</feature>
<feature type="domain" description="THUMP" evidence="1">
    <location>
        <begin position="54"/>
        <end position="158"/>
    </location>
</feature>
<feature type="binding site" evidence="1">
    <location>
        <begin position="176"/>
        <end position="177"/>
    </location>
    <ligand>
        <name>ATP</name>
        <dbReference type="ChEBI" id="CHEBI:30616"/>
    </ligand>
</feature>
<feature type="binding site" evidence="1">
    <location>
        <begin position="201"/>
        <end position="202"/>
    </location>
    <ligand>
        <name>ATP</name>
        <dbReference type="ChEBI" id="CHEBI:30616"/>
    </ligand>
</feature>
<feature type="binding site" evidence="1">
    <location>
        <position position="256"/>
    </location>
    <ligand>
        <name>ATP</name>
        <dbReference type="ChEBI" id="CHEBI:30616"/>
    </ligand>
</feature>
<feature type="binding site" evidence="1">
    <location>
        <position position="278"/>
    </location>
    <ligand>
        <name>ATP</name>
        <dbReference type="ChEBI" id="CHEBI:30616"/>
    </ligand>
</feature>
<feature type="binding site" evidence="1">
    <location>
        <position position="287"/>
    </location>
    <ligand>
        <name>ATP</name>
        <dbReference type="ChEBI" id="CHEBI:30616"/>
    </ligand>
</feature>